<evidence type="ECO:0000250" key="1"/>
<evidence type="ECO:0000250" key="2">
    <source>
        <dbReference type="UniProtKB" id="Q7Z5L2"/>
    </source>
</evidence>
<evidence type="ECO:0000255" key="3"/>
<evidence type="ECO:0000256" key="4">
    <source>
        <dbReference type="SAM" id="MobiDB-lite"/>
    </source>
</evidence>
<evidence type="ECO:0000305" key="5"/>
<evidence type="ECO:0007744" key="6">
    <source>
    </source>
</evidence>
<reference key="1">
    <citation type="journal article" date="2005" name="Science">
        <title>The transcriptional landscape of the mammalian genome.</title>
        <authorList>
            <person name="Carninci P."/>
            <person name="Kasukawa T."/>
            <person name="Katayama S."/>
            <person name="Gough J."/>
            <person name="Frith M.C."/>
            <person name="Maeda N."/>
            <person name="Oyama R."/>
            <person name="Ravasi T."/>
            <person name="Lenhard B."/>
            <person name="Wells C."/>
            <person name="Kodzius R."/>
            <person name="Shimokawa K."/>
            <person name="Bajic V.B."/>
            <person name="Brenner S.E."/>
            <person name="Batalov S."/>
            <person name="Forrest A.R."/>
            <person name="Zavolan M."/>
            <person name="Davis M.J."/>
            <person name="Wilming L.G."/>
            <person name="Aidinis V."/>
            <person name="Allen J.E."/>
            <person name="Ambesi-Impiombato A."/>
            <person name="Apweiler R."/>
            <person name="Aturaliya R.N."/>
            <person name="Bailey T.L."/>
            <person name="Bansal M."/>
            <person name="Baxter L."/>
            <person name="Beisel K.W."/>
            <person name="Bersano T."/>
            <person name="Bono H."/>
            <person name="Chalk A.M."/>
            <person name="Chiu K.P."/>
            <person name="Choudhary V."/>
            <person name="Christoffels A."/>
            <person name="Clutterbuck D.R."/>
            <person name="Crowe M.L."/>
            <person name="Dalla E."/>
            <person name="Dalrymple B.P."/>
            <person name="de Bono B."/>
            <person name="Della Gatta G."/>
            <person name="di Bernardo D."/>
            <person name="Down T."/>
            <person name="Engstrom P."/>
            <person name="Fagiolini M."/>
            <person name="Faulkner G."/>
            <person name="Fletcher C.F."/>
            <person name="Fukushima T."/>
            <person name="Furuno M."/>
            <person name="Futaki S."/>
            <person name="Gariboldi M."/>
            <person name="Georgii-Hemming P."/>
            <person name="Gingeras T.R."/>
            <person name="Gojobori T."/>
            <person name="Green R.E."/>
            <person name="Gustincich S."/>
            <person name="Harbers M."/>
            <person name="Hayashi Y."/>
            <person name="Hensch T.K."/>
            <person name="Hirokawa N."/>
            <person name="Hill D."/>
            <person name="Huminiecki L."/>
            <person name="Iacono M."/>
            <person name="Ikeo K."/>
            <person name="Iwama A."/>
            <person name="Ishikawa T."/>
            <person name="Jakt M."/>
            <person name="Kanapin A."/>
            <person name="Katoh M."/>
            <person name="Kawasawa Y."/>
            <person name="Kelso J."/>
            <person name="Kitamura H."/>
            <person name="Kitano H."/>
            <person name="Kollias G."/>
            <person name="Krishnan S.P."/>
            <person name="Kruger A."/>
            <person name="Kummerfeld S.K."/>
            <person name="Kurochkin I.V."/>
            <person name="Lareau L.F."/>
            <person name="Lazarevic D."/>
            <person name="Lipovich L."/>
            <person name="Liu J."/>
            <person name="Liuni S."/>
            <person name="McWilliam S."/>
            <person name="Madan Babu M."/>
            <person name="Madera M."/>
            <person name="Marchionni L."/>
            <person name="Matsuda H."/>
            <person name="Matsuzawa S."/>
            <person name="Miki H."/>
            <person name="Mignone F."/>
            <person name="Miyake S."/>
            <person name="Morris K."/>
            <person name="Mottagui-Tabar S."/>
            <person name="Mulder N."/>
            <person name="Nakano N."/>
            <person name="Nakauchi H."/>
            <person name="Ng P."/>
            <person name="Nilsson R."/>
            <person name="Nishiguchi S."/>
            <person name="Nishikawa S."/>
            <person name="Nori F."/>
            <person name="Ohara O."/>
            <person name="Okazaki Y."/>
            <person name="Orlando V."/>
            <person name="Pang K.C."/>
            <person name="Pavan W.J."/>
            <person name="Pavesi G."/>
            <person name="Pesole G."/>
            <person name="Petrovsky N."/>
            <person name="Piazza S."/>
            <person name="Reed J."/>
            <person name="Reid J.F."/>
            <person name="Ring B.Z."/>
            <person name="Ringwald M."/>
            <person name="Rost B."/>
            <person name="Ruan Y."/>
            <person name="Salzberg S.L."/>
            <person name="Sandelin A."/>
            <person name="Schneider C."/>
            <person name="Schoenbach C."/>
            <person name="Sekiguchi K."/>
            <person name="Semple C.A."/>
            <person name="Seno S."/>
            <person name="Sessa L."/>
            <person name="Sheng Y."/>
            <person name="Shibata Y."/>
            <person name="Shimada H."/>
            <person name="Shimada K."/>
            <person name="Silva D."/>
            <person name="Sinclair B."/>
            <person name="Sperling S."/>
            <person name="Stupka E."/>
            <person name="Sugiura K."/>
            <person name="Sultana R."/>
            <person name="Takenaka Y."/>
            <person name="Taki K."/>
            <person name="Tammoja K."/>
            <person name="Tan S.L."/>
            <person name="Tang S."/>
            <person name="Taylor M.S."/>
            <person name="Tegner J."/>
            <person name="Teichmann S.A."/>
            <person name="Ueda H.R."/>
            <person name="van Nimwegen E."/>
            <person name="Verardo R."/>
            <person name="Wei C.L."/>
            <person name="Yagi K."/>
            <person name="Yamanishi H."/>
            <person name="Zabarovsky E."/>
            <person name="Zhu S."/>
            <person name="Zimmer A."/>
            <person name="Hide W."/>
            <person name="Bult C."/>
            <person name="Grimmond S.M."/>
            <person name="Teasdale R.D."/>
            <person name="Liu E.T."/>
            <person name="Brusic V."/>
            <person name="Quackenbush J."/>
            <person name="Wahlestedt C."/>
            <person name="Mattick J.S."/>
            <person name="Hume D.A."/>
            <person name="Kai C."/>
            <person name="Sasaki D."/>
            <person name="Tomaru Y."/>
            <person name="Fukuda S."/>
            <person name="Kanamori-Katayama M."/>
            <person name="Suzuki M."/>
            <person name="Aoki J."/>
            <person name="Arakawa T."/>
            <person name="Iida J."/>
            <person name="Imamura K."/>
            <person name="Itoh M."/>
            <person name="Kato T."/>
            <person name="Kawaji H."/>
            <person name="Kawagashira N."/>
            <person name="Kawashima T."/>
            <person name="Kojima M."/>
            <person name="Kondo S."/>
            <person name="Konno H."/>
            <person name="Nakano K."/>
            <person name="Ninomiya N."/>
            <person name="Nishio T."/>
            <person name="Okada M."/>
            <person name="Plessy C."/>
            <person name="Shibata K."/>
            <person name="Shiraki T."/>
            <person name="Suzuki S."/>
            <person name="Tagami M."/>
            <person name="Waki K."/>
            <person name="Watahiki A."/>
            <person name="Okamura-Oho Y."/>
            <person name="Suzuki H."/>
            <person name="Kawai J."/>
            <person name="Hayashizaki Y."/>
        </authorList>
    </citation>
    <scope>NUCLEOTIDE SEQUENCE [LARGE SCALE MRNA]</scope>
    <source>
        <strain>C57BL/6J</strain>
    </source>
</reference>
<reference key="2">
    <citation type="journal article" date="2004" name="Genome Res.">
        <title>The status, quality, and expansion of the NIH full-length cDNA project: the Mammalian Gene Collection (MGC).</title>
        <authorList>
            <consortium name="The MGC Project Team"/>
        </authorList>
    </citation>
    <scope>NUCLEOTIDE SEQUENCE [LARGE SCALE MRNA]</scope>
    <source>
        <strain>Czech II</strain>
        <tissue>Mammary gland</tissue>
    </source>
</reference>
<reference key="3">
    <citation type="journal article" date="2010" name="Cell">
        <title>A tissue-specific atlas of mouse protein phosphorylation and expression.</title>
        <authorList>
            <person name="Huttlin E.L."/>
            <person name="Jedrychowski M.P."/>
            <person name="Elias J.E."/>
            <person name="Goswami T."/>
            <person name="Rad R."/>
            <person name="Beausoleil S.A."/>
            <person name="Villen J."/>
            <person name="Haas W."/>
            <person name="Sowa M.E."/>
            <person name="Gygi S.P."/>
        </authorList>
    </citation>
    <scope>PHOSPHORYLATION [LARGE SCALE ANALYSIS] AT THR-695</scope>
    <scope>IDENTIFICATION BY MASS SPECTROMETRY [LARGE SCALE ANALYSIS]</scope>
    <source>
        <tissue>Testis</tissue>
    </source>
</reference>
<organism>
    <name type="scientific">Mus musculus</name>
    <name type="common">Mouse</name>
    <dbReference type="NCBI Taxonomy" id="10090"/>
    <lineage>
        <taxon>Eukaryota</taxon>
        <taxon>Metazoa</taxon>
        <taxon>Chordata</taxon>
        <taxon>Craniata</taxon>
        <taxon>Vertebrata</taxon>
        <taxon>Euteleostomi</taxon>
        <taxon>Mammalia</taxon>
        <taxon>Eutheria</taxon>
        <taxon>Euarchontoglires</taxon>
        <taxon>Glires</taxon>
        <taxon>Rodentia</taxon>
        <taxon>Myomorpha</taxon>
        <taxon>Muroidea</taxon>
        <taxon>Muridae</taxon>
        <taxon>Murinae</taxon>
        <taxon>Mus</taxon>
        <taxon>Mus</taxon>
    </lineage>
</organism>
<feature type="chain" id="PRO_0000087488" description="Coiled-coil domain-containing protein R3HCC1L">
    <location>
        <begin position="1"/>
        <end position="775"/>
    </location>
</feature>
<feature type="region of interest" description="Disordered" evidence="4">
    <location>
        <begin position="1"/>
        <end position="127"/>
    </location>
</feature>
<feature type="region of interest" description="EJC-binding motif; may mediate interaction with the EJC" evidence="1">
    <location>
        <begin position="7"/>
        <end position="27"/>
    </location>
</feature>
<feature type="region of interest" description="Disordered" evidence="4">
    <location>
        <begin position="235"/>
        <end position="262"/>
    </location>
</feature>
<feature type="region of interest" description="Disordered" evidence="4">
    <location>
        <begin position="755"/>
        <end position="775"/>
    </location>
</feature>
<feature type="coiled-coil region" evidence="3">
    <location>
        <begin position="734"/>
        <end position="766"/>
    </location>
</feature>
<feature type="compositionally biased region" description="Basic and acidic residues" evidence="4">
    <location>
        <begin position="1"/>
        <end position="16"/>
    </location>
</feature>
<feature type="compositionally biased region" description="Basic and acidic residues" evidence="4">
    <location>
        <begin position="65"/>
        <end position="112"/>
    </location>
</feature>
<feature type="compositionally biased region" description="Polar residues" evidence="4">
    <location>
        <begin position="235"/>
        <end position="247"/>
    </location>
</feature>
<feature type="modified residue" description="Phosphoserine" evidence="2">
    <location>
        <position position="671"/>
    </location>
</feature>
<feature type="modified residue" description="Phosphothreonine" evidence="6">
    <location>
        <position position="695"/>
    </location>
</feature>
<feature type="sequence conflict" description="In Ref. 2; AAH38935." evidence="5" ref="2">
    <original>G</original>
    <variation>D</variation>
    <location>
        <position position="72"/>
    </location>
</feature>
<feature type="sequence conflict" description="In Ref. 2; AAH38935." evidence="5" ref="2">
    <original>C</original>
    <variation>G</variation>
    <location>
        <position position="96"/>
    </location>
</feature>
<feature type="sequence conflict" description="In Ref. 2; AAH38935." evidence="5" ref="2">
    <original>C</original>
    <variation>F</variation>
    <location>
        <position position="106"/>
    </location>
</feature>
<feature type="sequence conflict" description="In Ref. 2; AAH38935." evidence="5" ref="2">
    <original>K</original>
    <variation>E</variation>
    <location>
        <position position="254"/>
    </location>
</feature>
<feature type="sequence conflict" description="In Ref. 2; AAH38935." evidence="5" ref="2">
    <original>S</original>
    <variation>F</variation>
    <location>
        <position position="340"/>
    </location>
</feature>
<feature type="sequence conflict" description="In Ref. 2; AAH38935." evidence="5" ref="2">
    <original>T</original>
    <variation>S</variation>
    <location>
        <position position="373"/>
    </location>
</feature>
<feature type="sequence conflict" description="In Ref. 2; AAH38935." evidence="5" ref="2">
    <original>A</original>
    <variation>V</variation>
    <location>
        <position position="385"/>
    </location>
</feature>
<feature type="sequence conflict" description="In Ref. 2; AAH38935." evidence="5" ref="2">
    <original>K</original>
    <variation>E</variation>
    <location>
        <position position="429"/>
    </location>
</feature>
<feature type="sequence conflict" description="In Ref. 2; AAH38935." evidence="5" ref="2">
    <original>D</original>
    <variation>N</variation>
    <location>
        <position position="433"/>
    </location>
</feature>
<feature type="sequence conflict" description="In Ref. 2; AAH38935." evidence="5" ref="2">
    <original>T</original>
    <variation>S</variation>
    <location>
        <position position="459"/>
    </location>
</feature>
<comment type="subunit">
    <text evidence="1">May interact with the exon junction complex (EJC) composed at least of CASC3, EIF4A3, MAGOH and RBM8A.</text>
</comment>
<gene>
    <name type="primary">R3hcc1l</name>
    <name type="synonym">D19Ertd386e</name>
    <name type="synonym">Gidrp88</name>
</gene>
<dbReference type="EMBL" id="AK082926">
    <property type="protein sequence ID" value="BAC38694.1"/>
    <property type="molecule type" value="mRNA"/>
</dbReference>
<dbReference type="EMBL" id="AK147893">
    <property type="protein sequence ID" value="BAE28210.1"/>
    <property type="molecule type" value="mRNA"/>
</dbReference>
<dbReference type="EMBL" id="BC038935">
    <property type="protein sequence ID" value="AAH38935.1"/>
    <property type="molecule type" value="mRNA"/>
</dbReference>
<dbReference type="CCDS" id="CCDS29829.1"/>
<dbReference type="RefSeq" id="NP_803415.1">
    <property type="nucleotide sequence ID" value="NM_177464.4"/>
</dbReference>
<dbReference type="SMR" id="Q8BJM3"/>
<dbReference type="FunCoup" id="Q8BJM3">
    <property type="interactions" value="1858"/>
</dbReference>
<dbReference type="STRING" id="10090.ENSMUSP00000026188"/>
<dbReference type="iPTMnet" id="Q8BJM3"/>
<dbReference type="PhosphoSitePlus" id="Q8BJM3"/>
<dbReference type="PaxDb" id="10090-ENSMUSP00000026188"/>
<dbReference type="ProteomicsDB" id="253135"/>
<dbReference type="Pumba" id="Q8BJM3"/>
<dbReference type="Antibodypedia" id="52284">
    <property type="antibodies" value="96 antibodies from 24 providers"/>
</dbReference>
<dbReference type="Ensembl" id="ENSMUST00000026188.10">
    <property type="protein sequence ID" value="ENSMUSP00000026188.4"/>
    <property type="gene ID" value="ENSMUSG00000025184.11"/>
</dbReference>
<dbReference type="GeneID" id="52013"/>
<dbReference type="KEGG" id="mmu:52013"/>
<dbReference type="UCSC" id="uc008hnq.1">
    <property type="organism name" value="mouse"/>
</dbReference>
<dbReference type="AGR" id="MGI:1196316"/>
<dbReference type="CTD" id="27291"/>
<dbReference type="MGI" id="MGI:1196316">
    <property type="gene designation" value="R3hcc1l"/>
</dbReference>
<dbReference type="VEuPathDB" id="HostDB:ENSMUSG00000025184"/>
<dbReference type="eggNOG" id="KOG4483">
    <property type="taxonomic scope" value="Eukaryota"/>
</dbReference>
<dbReference type="GeneTree" id="ENSGT00530000063711"/>
<dbReference type="HOGENOM" id="CLU_025109_0_0_1"/>
<dbReference type="InParanoid" id="Q8BJM3"/>
<dbReference type="OMA" id="LCIKYEP"/>
<dbReference type="OrthoDB" id="5418203at2759"/>
<dbReference type="PhylomeDB" id="Q8BJM3"/>
<dbReference type="TreeFam" id="TF324168"/>
<dbReference type="BioGRID-ORCS" id="52013">
    <property type="hits" value="1 hit in 77 CRISPR screens"/>
</dbReference>
<dbReference type="ChiTaRS" id="R3hcc1l">
    <property type="organism name" value="mouse"/>
</dbReference>
<dbReference type="PRO" id="PR:Q8BJM3"/>
<dbReference type="Proteomes" id="UP000000589">
    <property type="component" value="Chromosome 19"/>
</dbReference>
<dbReference type="RNAct" id="Q8BJM3">
    <property type="molecule type" value="protein"/>
</dbReference>
<dbReference type="Bgee" id="ENSMUSG00000025184">
    <property type="expression patterns" value="Expressed in granulocyte and 213 other cell types or tissues"/>
</dbReference>
<dbReference type="ExpressionAtlas" id="Q8BJM3">
    <property type="expression patterns" value="baseline and differential"/>
</dbReference>
<dbReference type="Gene3D" id="3.30.70.330">
    <property type="match status" value="1"/>
</dbReference>
<dbReference type="InterPro" id="IPR012677">
    <property type="entry name" value="Nucleotide-bd_a/b_plait_sf"/>
</dbReference>
<dbReference type="InterPro" id="IPR039884">
    <property type="entry name" value="R3HC1/R3HCL"/>
</dbReference>
<dbReference type="PANTHER" id="PTHR21678:SF7">
    <property type="entry name" value="COILED-COIL DOMAIN-CONTAINING PROTEIN R3HCC1L"/>
    <property type="match status" value="1"/>
</dbReference>
<dbReference type="PANTHER" id="PTHR21678">
    <property type="entry name" value="GROWTH INHIBITION AND DIFFERENTIATION RELATED PROTEIN 88"/>
    <property type="match status" value="1"/>
</dbReference>
<sequence>MQQEAERCRVRTKRPDMALYVPKARRGTALLKSSDQEEGHGPPAFVPKDQKEGCLPQKISASKPESQRRGAGHSDRKDVDCREGKRSASQLRKDRCPQKQNKEKACSKKGAEESTEASSQEHQHRAPDAGIVSSIPLQRLFKPKDMDCWEVQTAGATGHWRVSPSQSSSEVSAAQVPSRPFQNVELCDFSGETFVNRNLESSIVTEAKVPELVSQFPQVVTTLLKPDGMAMPVTLSSDSETAPSSLETPDGMSKHSPGDISVVSVPGGPDEDVDSTFVDFEVESEGTVNSTESVLGQKGVDSILETVDNVSLKMAVVSKLESTNGTIDPAVTRECESDSSADELCVKSEPSDTAVLVHEIDTDDGFRNVCDSTSKACMVDIAGTACDPVTEGSSCTGAVGESGESSGNMRNFSDYIEMSADVAPLDRAKSENDSENISSLSACSDIYAESIASGFTESTGKLIESVSDGASSLPIKKTADSNIATCLDSELSMSDASDVLLESALGSDLDTTEEMTEALHDLKTAEEFKTKEEDYSESVVCGISFSDSSVETSVDLKTTDTSHIQGSSAVEESWESMFNDDGDCVDPRLLLELSGNVKNRKSIQEPRFDYYSHELPDIDLSECEFPHVIEIYDFPQEFRTEDLLRIFCSYQKKGFDIKWVDDTHALGVFASPITARDALGTKHTMVKIRPLSQATRAAKAKARACAEFLQPAKERPETSAALARRLVISALGVRSKQSKTEREAELRKLQEARERKRLEAKQREDIWEGRDQSVV</sequence>
<protein>
    <recommendedName>
        <fullName>Coiled-coil domain-containing protein R3HCC1L</fullName>
    </recommendedName>
    <alternativeName>
        <fullName>Growth inhibition and differentiation-related protein 88 homolog</fullName>
    </alternativeName>
    <alternativeName>
        <fullName>R3H and coiled-coil domain-containing protein 1-like</fullName>
    </alternativeName>
</protein>
<accession>Q8BJM3</accession>
<accession>Q3UGJ8</accession>
<accession>Q5U5U8</accession>
<keyword id="KW-0175">Coiled coil</keyword>
<keyword id="KW-0597">Phosphoprotein</keyword>
<keyword id="KW-1185">Reference proteome</keyword>
<name>R3HCL_MOUSE</name>
<proteinExistence type="evidence at protein level"/>